<feature type="chain" id="PRO_0000157043" description="Thiamine-phosphate synthase">
    <location>
        <begin position="1"/>
        <end position="213"/>
    </location>
</feature>
<feature type="binding site" evidence="1">
    <location>
        <begin position="40"/>
        <end position="44"/>
    </location>
    <ligand>
        <name>4-amino-2-methyl-5-(diphosphooxymethyl)pyrimidine</name>
        <dbReference type="ChEBI" id="CHEBI:57841"/>
    </ligand>
</feature>
<feature type="binding site" evidence="1">
    <location>
        <position position="75"/>
    </location>
    <ligand>
        <name>4-amino-2-methyl-5-(diphosphooxymethyl)pyrimidine</name>
        <dbReference type="ChEBI" id="CHEBI:57841"/>
    </ligand>
</feature>
<feature type="binding site" evidence="1">
    <location>
        <position position="76"/>
    </location>
    <ligand>
        <name>Mg(2+)</name>
        <dbReference type="ChEBI" id="CHEBI:18420"/>
    </ligand>
</feature>
<feature type="binding site" evidence="1">
    <location>
        <position position="95"/>
    </location>
    <ligand>
        <name>Mg(2+)</name>
        <dbReference type="ChEBI" id="CHEBI:18420"/>
    </ligand>
</feature>
<feature type="binding site" evidence="1">
    <location>
        <position position="113"/>
    </location>
    <ligand>
        <name>4-amino-2-methyl-5-(diphosphooxymethyl)pyrimidine</name>
        <dbReference type="ChEBI" id="CHEBI:57841"/>
    </ligand>
</feature>
<feature type="binding site" evidence="1">
    <location>
        <begin position="139"/>
        <end position="141"/>
    </location>
    <ligand>
        <name>2-[(2R,5Z)-2-carboxy-4-methylthiazol-5(2H)-ylidene]ethyl phosphate</name>
        <dbReference type="ChEBI" id="CHEBI:62899"/>
    </ligand>
</feature>
<feature type="binding site" evidence="1">
    <location>
        <position position="142"/>
    </location>
    <ligand>
        <name>4-amino-2-methyl-5-(diphosphooxymethyl)pyrimidine</name>
        <dbReference type="ChEBI" id="CHEBI:57841"/>
    </ligand>
</feature>
<feature type="binding site" evidence="1">
    <location>
        <position position="171"/>
    </location>
    <ligand>
        <name>2-[(2R,5Z)-2-carboxy-4-methylthiazol-5(2H)-ylidene]ethyl phosphate</name>
        <dbReference type="ChEBI" id="CHEBI:62899"/>
    </ligand>
</feature>
<feature type="binding site" evidence="1">
    <location>
        <begin position="191"/>
        <end position="192"/>
    </location>
    <ligand>
        <name>2-[(2R,5Z)-2-carboxy-4-methylthiazol-5(2H)-ylidene]ethyl phosphate</name>
        <dbReference type="ChEBI" id="CHEBI:62899"/>
    </ligand>
</feature>
<dbReference type="EC" id="2.5.1.3" evidence="1"/>
<dbReference type="EMBL" id="BA000017">
    <property type="protein sequence ID" value="BAB58253.1"/>
    <property type="molecule type" value="Genomic_DNA"/>
</dbReference>
<dbReference type="RefSeq" id="WP_000483153.1">
    <property type="nucleotide sequence ID" value="NC_002758.2"/>
</dbReference>
<dbReference type="SMR" id="P66918"/>
<dbReference type="KEGG" id="sav:SAV2091"/>
<dbReference type="HOGENOM" id="CLU_018272_3_2_9"/>
<dbReference type="PhylomeDB" id="P66918"/>
<dbReference type="UniPathway" id="UPA00060">
    <property type="reaction ID" value="UER00141"/>
</dbReference>
<dbReference type="Proteomes" id="UP000002481">
    <property type="component" value="Chromosome"/>
</dbReference>
<dbReference type="GO" id="GO:0005737">
    <property type="term" value="C:cytoplasm"/>
    <property type="evidence" value="ECO:0007669"/>
    <property type="project" value="TreeGrafter"/>
</dbReference>
<dbReference type="GO" id="GO:0000287">
    <property type="term" value="F:magnesium ion binding"/>
    <property type="evidence" value="ECO:0007669"/>
    <property type="project" value="UniProtKB-UniRule"/>
</dbReference>
<dbReference type="GO" id="GO:0004789">
    <property type="term" value="F:thiamine-phosphate diphosphorylase activity"/>
    <property type="evidence" value="ECO:0007669"/>
    <property type="project" value="UniProtKB-UniRule"/>
</dbReference>
<dbReference type="GO" id="GO:0009228">
    <property type="term" value="P:thiamine biosynthetic process"/>
    <property type="evidence" value="ECO:0007669"/>
    <property type="project" value="UniProtKB-KW"/>
</dbReference>
<dbReference type="GO" id="GO:0009229">
    <property type="term" value="P:thiamine diphosphate biosynthetic process"/>
    <property type="evidence" value="ECO:0007669"/>
    <property type="project" value="UniProtKB-UniRule"/>
</dbReference>
<dbReference type="CDD" id="cd00564">
    <property type="entry name" value="TMP_TenI"/>
    <property type="match status" value="1"/>
</dbReference>
<dbReference type="FunFam" id="3.20.20.70:FF:000096">
    <property type="entry name" value="Thiamine-phosphate synthase"/>
    <property type="match status" value="1"/>
</dbReference>
<dbReference type="Gene3D" id="3.20.20.70">
    <property type="entry name" value="Aldolase class I"/>
    <property type="match status" value="1"/>
</dbReference>
<dbReference type="HAMAP" id="MF_00097">
    <property type="entry name" value="TMP_synthase"/>
    <property type="match status" value="1"/>
</dbReference>
<dbReference type="InterPro" id="IPR013785">
    <property type="entry name" value="Aldolase_TIM"/>
</dbReference>
<dbReference type="InterPro" id="IPR036206">
    <property type="entry name" value="ThiamineP_synth_sf"/>
</dbReference>
<dbReference type="InterPro" id="IPR022998">
    <property type="entry name" value="ThiamineP_synth_TenI"/>
</dbReference>
<dbReference type="InterPro" id="IPR034291">
    <property type="entry name" value="TMP_synthase"/>
</dbReference>
<dbReference type="NCBIfam" id="TIGR00693">
    <property type="entry name" value="thiE"/>
    <property type="match status" value="1"/>
</dbReference>
<dbReference type="PANTHER" id="PTHR20857">
    <property type="entry name" value="THIAMINE-PHOSPHATE PYROPHOSPHORYLASE"/>
    <property type="match status" value="1"/>
</dbReference>
<dbReference type="PANTHER" id="PTHR20857:SF15">
    <property type="entry name" value="THIAMINE-PHOSPHATE SYNTHASE"/>
    <property type="match status" value="1"/>
</dbReference>
<dbReference type="Pfam" id="PF02581">
    <property type="entry name" value="TMP-TENI"/>
    <property type="match status" value="1"/>
</dbReference>
<dbReference type="SUPFAM" id="SSF51391">
    <property type="entry name" value="Thiamin phosphate synthase"/>
    <property type="match status" value="1"/>
</dbReference>
<accession>P66918</accession>
<accession>Q99SG6</accession>
<comment type="function">
    <text evidence="1">Condenses 4-methyl-5-(beta-hydroxyethyl)thiazole monophosphate (THZ-P) and 2-methyl-4-amino-5-hydroxymethyl pyrimidine pyrophosphate (HMP-PP) to form thiamine monophosphate (TMP).</text>
</comment>
<comment type="catalytic activity">
    <reaction evidence="1">
        <text>2-[(2R,5Z)-2-carboxy-4-methylthiazol-5(2H)-ylidene]ethyl phosphate + 4-amino-2-methyl-5-(diphosphooxymethyl)pyrimidine + 2 H(+) = thiamine phosphate + CO2 + diphosphate</text>
        <dbReference type="Rhea" id="RHEA:47844"/>
        <dbReference type="ChEBI" id="CHEBI:15378"/>
        <dbReference type="ChEBI" id="CHEBI:16526"/>
        <dbReference type="ChEBI" id="CHEBI:33019"/>
        <dbReference type="ChEBI" id="CHEBI:37575"/>
        <dbReference type="ChEBI" id="CHEBI:57841"/>
        <dbReference type="ChEBI" id="CHEBI:62899"/>
        <dbReference type="EC" id="2.5.1.3"/>
    </reaction>
</comment>
<comment type="catalytic activity">
    <reaction evidence="1">
        <text>2-(2-carboxy-4-methylthiazol-5-yl)ethyl phosphate + 4-amino-2-methyl-5-(diphosphooxymethyl)pyrimidine + 2 H(+) = thiamine phosphate + CO2 + diphosphate</text>
        <dbReference type="Rhea" id="RHEA:47848"/>
        <dbReference type="ChEBI" id="CHEBI:15378"/>
        <dbReference type="ChEBI" id="CHEBI:16526"/>
        <dbReference type="ChEBI" id="CHEBI:33019"/>
        <dbReference type="ChEBI" id="CHEBI:37575"/>
        <dbReference type="ChEBI" id="CHEBI:57841"/>
        <dbReference type="ChEBI" id="CHEBI:62890"/>
        <dbReference type="EC" id="2.5.1.3"/>
    </reaction>
</comment>
<comment type="catalytic activity">
    <reaction evidence="1">
        <text>4-methyl-5-(2-phosphooxyethyl)-thiazole + 4-amino-2-methyl-5-(diphosphooxymethyl)pyrimidine + H(+) = thiamine phosphate + diphosphate</text>
        <dbReference type="Rhea" id="RHEA:22328"/>
        <dbReference type="ChEBI" id="CHEBI:15378"/>
        <dbReference type="ChEBI" id="CHEBI:33019"/>
        <dbReference type="ChEBI" id="CHEBI:37575"/>
        <dbReference type="ChEBI" id="CHEBI:57841"/>
        <dbReference type="ChEBI" id="CHEBI:58296"/>
        <dbReference type="EC" id="2.5.1.3"/>
    </reaction>
</comment>
<comment type="cofactor">
    <cofactor evidence="1">
        <name>Mg(2+)</name>
        <dbReference type="ChEBI" id="CHEBI:18420"/>
    </cofactor>
    <text evidence="1">Binds 1 Mg(2+) ion per subunit.</text>
</comment>
<comment type="pathway">
    <text evidence="1">Cofactor biosynthesis; thiamine diphosphate biosynthesis; thiamine phosphate from 4-amino-2-methyl-5-diphosphomethylpyrimidine and 4-methyl-5-(2-phosphoethyl)-thiazole: step 1/1.</text>
</comment>
<comment type="similarity">
    <text evidence="1">Belongs to the thiamine-phosphate synthase family.</text>
</comment>
<reference key="1">
    <citation type="journal article" date="2001" name="Lancet">
        <title>Whole genome sequencing of meticillin-resistant Staphylococcus aureus.</title>
        <authorList>
            <person name="Kuroda M."/>
            <person name="Ohta T."/>
            <person name="Uchiyama I."/>
            <person name="Baba T."/>
            <person name="Yuzawa H."/>
            <person name="Kobayashi I."/>
            <person name="Cui L."/>
            <person name="Oguchi A."/>
            <person name="Aoki K."/>
            <person name="Nagai Y."/>
            <person name="Lian J.-Q."/>
            <person name="Ito T."/>
            <person name="Kanamori M."/>
            <person name="Matsumaru H."/>
            <person name="Maruyama A."/>
            <person name="Murakami H."/>
            <person name="Hosoyama A."/>
            <person name="Mizutani-Ui Y."/>
            <person name="Takahashi N.K."/>
            <person name="Sawano T."/>
            <person name="Inoue R."/>
            <person name="Kaito C."/>
            <person name="Sekimizu K."/>
            <person name="Hirakawa H."/>
            <person name="Kuhara S."/>
            <person name="Goto S."/>
            <person name="Yabuzaki J."/>
            <person name="Kanehisa M."/>
            <person name="Yamashita A."/>
            <person name="Oshima K."/>
            <person name="Furuya K."/>
            <person name="Yoshino C."/>
            <person name="Shiba T."/>
            <person name="Hattori M."/>
            <person name="Ogasawara N."/>
            <person name="Hayashi H."/>
            <person name="Hiramatsu K."/>
        </authorList>
    </citation>
    <scope>NUCLEOTIDE SEQUENCE [LARGE SCALE GENOMIC DNA]</scope>
    <source>
        <strain>Mu50 / ATCC 700699</strain>
    </source>
</reference>
<name>THIE_STAAM</name>
<proteinExistence type="inferred from homology"/>
<sequence>MFNQSYLNVYFICGTSDVPSHRTIHEVLEAALKAGITLFQFREKGESALKGNDKLVLAKELQHLCHQYDVPFIVNDDVSLAKEINADGIHVGQDDAKVKEIAQYFTDKIIGLSISDLDEYAKSDLTHVDYIGVGPIYPTPSKHDAHIPVGPEMIATFKEMNPQLPIVAIGGINTNNVAPIVEAGANGISVISAISKSENIEKTVNRFKDFFNN</sequence>
<evidence type="ECO:0000255" key="1">
    <source>
        <dbReference type="HAMAP-Rule" id="MF_00097"/>
    </source>
</evidence>
<protein>
    <recommendedName>
        <fullName evidence="1">Thiamine-phosphate synthase</fullName>
        <shortName evidence="1">TP synthase</shortName>
        <shortName evidence="1">TPS</shortName>
        <ecNumber evidence="1">2.5.1.3</ecNumber>
    </recommendedName>
    <alternativeName>
        <fullName evidence="1">Thiamine-phosphate pyrophosphorylase</fullName>
        <shortName evidence="1">TMP pyrophosphorylase</shortName>
        <shortName evidence="1">TMP-PPase</shortName>
    </alternativeName>
</protein>
<gene>
    <name evidence="1" type="primary">thiE</name>
    <name type="ordered locus">SAV2091</name>
</gene>
<keyword id="KW-0460">Magnesium</keyword>
<keyword id="KW-0479">Metal-binding</keyword>
<keyword id="KW-0784">Thiamine biosynthesis</keyword>
<keyword id="KW-0808">Transferase</keyword>
<organism>
    <name type="scientific">Staphylococcus aureus (strain Mu50 / ATCC 700699)</name>
    <dbReference type="NCBI Taxonomy" id="158878"/>
    <lineage>
        <taxon>Bacteria</taxon>
        <taxon>Bacillati</taxon>
        <taxon>Bacillota</taxon>
        <taxon>Bacilli</taxon>
        <taxon>Bacillales</taxon>
        <taxon>Staphylococcaceae</taxon>
        <taxon>Staphylococcus</taxon>
    </lineage>
</organism>